<dbReference type="EC" id="3.1.3.11" evidence="1"/>
<dbReference type="EMBL" id="CP000029">
    <property type="protein sequence ID" value="AAW52938.1"/>
    <property type="molecule type" value="Genomic_DNA"/>
</dbReference>
<dbReference type="RefSeq" id="WP_002438166.1">
    <property type="nucleotide sequence ID" value="NC_002976.3"/>
</dbReference>
<dbReference type="STRING" id="176279.SERP2076"/>
<dbReference type="KEGG" id="ser:SERP2076"/>
<dbReference type="eggNOG" id="COG3855">
    <property type="taxonomic scope" value="Bacteria"/>
</dbReference>
<dbReference type="HOGENOM" id="CLU_028392_2_0_9"/>
<dbReference type="UniPathway" id="UPA00138"/>
<dbReference type="Proteomes" id="UP000000531">
    <property type="component" value="Chromosome"/>
</dbReference>
<dbReference type="GO" id="GO:0042132">
    <property type="term" value="F:fructose 1,6-bisphosphate 1-phosphatase activity"/>
    <property type="evidence" value="ECO:0007669"/>
    <property type="project" value="UniProtKB-UniRule"/>
</dbReference>
<dbReference type="GO" id="GO:0006094">
    <property type="term" value="P:gluconeogenesis"/>
    <property type="evidence" value="ECO:0007669"/>
    <property type="project" value="UniProtKB-UniRule"/>
</dbReference>
<dbReference type="Gene3D" id="3.60.21.10">
    <property type="match status" value="1"/>
</dbReference>
<dbReference type="HAMAP" id="MF_01854">
    <property type="entry name" value="FBPase_class3"/>
    <property type="match status" value="1"/>
</dbReference>
<dbReference type="InterPro" id="IPR009164">
    <property type="entry name" value="FBPtase_class3"/>
</dbReference>
<dbReference type="InterPro" id="IPR029052">
    <property type="entry name" value="Metallo-depent_PP-like"/>
</dbReference>
<dbReference type="Pfam" id="PF06874">
    <property type="entry name" value="FBPase_2"/>
    <property type="match status" value="1"/>
</dbReference>
<dbReference type="PIRSF" id="PIRSF000906">
    <property type="entry name" value="FBPtase_Bacill"/>
    <property type="match status" value="1"/>
</dbReference>
<dbReference type="SUPFAM" id="SSF56300">
    <property type="entry name" value="Metallo-dependent phosphatases"/>
    <property type="match status" value="1"/>
</dbReference>
<proteinExistence type="inferred from homology"/>
<accession>Q5HLB1</accession>
<feature type="chain" id="PRO_0000359997" description="Fructose-1,6-bisphosphatase class 3">
    <location>
        <begin position="1"/>
        <end position="654"/>
    </location>
</feature>
<reference key="1">
    <citation type="journal article" date="2005" name="J. Bacteriol.">
        <title>Insights on evolution of virulence and resistance from the complete genome analysis of an early methicillin-resistant Staphylococcus aureus strain and a biofilm-producing methicillin-resistant Staphylococcus epidermidis strain.</title>
        <authorList>
            <person name="Gill S.R."/>
            <person name="Fouts D.E."/>
            <person name="Archer G.L."/>
            <person name="Mongodin E.F."/>
            <person name="DeBoy R.T."/>
            <person name="Ravel J."/>
            <person name="Paulsen I.T."/>
            <person name="Kolonay J.F."/>
            <person name="Brinkac L.M."/>
            <person name="Beanan M.J."/>
            <person name="Dodson R.J."/>
            <person name="Daugherty S.C."/>
            <person name="Madupu R."/>
            <person name="Angiuoli S.V."/>
            <person name="Durkin A.S."/>
            <person name="Haft D.H."/>
            <person name="Vamathevan J.J."/>
            <person name="Khouri H."/>
            <person name="Utterback T.R."/>
            <person name="Lee C."/>
            <person name="Dimitrov G."/>
            <person name="Jiang L."/>
            <person name="Qin H."/>
            <person name="Weidman J."/>
            <person name="Tran K."/>
            <person name="Kang K.H."/>
            <person name="Hance I.R."/>
            <person name="Nelson K.E."/>
            <person name="Fraser C.M."/>
        </authorList>
    </citation>
    <scope>NUCLEOTIDE SEQUENCE [LARGE SCALE GENOMIC DNA]</scope>
    <source>
        <strain>ATCC 35984 / DSM 28319 / BCRC 17069 / CCUG 31568 / BM 3577 / RP62A</strain>
    </source>
</reference>
<keyword id="KW-0119">Carbohydrate metabolism</keyword>
<keyword id="KW-0378">Hydrolase</keyword>
<keyword id="KW-0464">Manganese</keyword>
<keyword id="KW-1185">Reference proteome</keyword>
<organism>
    <name type="scientific">Staphylococcus epidermidis (strain ATCC 35984 / DSM 28319 / BCRC 17069 / CCUG 31568 / BM 3577 / RP62A)</name>
    <dbReference type="NCBI Taxonomy" id="176279"/>
    <lineage>
        <taxon>Bacteria</taxon>
        <taxon>Bacillati</taxon>
        <taxon>Bacillota</taxon>
        <taxon>Bacilli</taxon>
        <taxon>Bacillales</taxon>
        <taxon>Staphylococcaceae</taxon>
        <taxon>Staphylococcus</taxon>
    </lineage>
</organism>
<gene>
    <name evidence="1" type="primary">fbp</name>
    <name type="ordered locus">SERP2076</name>
</gene>
<protein>
    <recommendedName>
        <fullName evidence="1">Fructose-1,6-bisphosphatase class 3</fullName>
        <shortName evidence="1">FBPase class 3</shortName>
        <ecNumber evidence="1">3.1.3.11</ecNumber>
    </recommendedName>
    <alternativeName>
        <fullName evidence="1">D-fructose-1,6-bisphosphate 1-phosphohydrolase class 3</fullName>
    </alternativeName>
</protein>
<name>F16PC_STAEQ</name>
<sequence>MTHITESEMKQKYLDLLSQKFDSAEKLATEIINLESILELPKGTEHFVSDLHGEYESFQHVLRNGSGNVRAKINDIFKDKLSQQEINDLAALVYYPEEKLKLVKNNFDSIGTLNIWYITTIQRLIDLITYCSSKYTRSKLRKALPEQYVYIIEELLYKSNEFHNKKPYYETLVNQIIELEQSDDLIIGLSYTVQRLVVDHLHVVGDIYDRGPKPDKIMDTLINYHSVDIQWGNHDVLWIGAYAGSKVCLANLLRICARYDNLDIIEDAYGINLRPLLTLAEKYYDAENPAFKPKKRPDKDVSLTKREESQITKIHQAIAMIQFKLEMPIIKRRPSFEMEERLVLEKIDYDNNEITIYNKTYPLKDTCFQTVNPNNPAELLAEEKEVMDKLLLSFQQSEKLRRHMSFLMRKGKLYLPYNGNLLIHGCIPVDENGEMESFEIEGERLSGRELLDVFEYHVRRAFDHKESTEDISTDLVWYLWTGKYSSLFGKRAMTTFERYFIEDKASHKEEKNPYYYLREDVDMIRKMLKDFGLNPDEGRIINGHTPVKEIDGEDPIKANGKMLVIDGGFSKAYQSTTGIAGYTLLYNSFGMQLVAHKEFNRKEKVLSMGADELSVKRVVDEELQRKKIRDTNIGKQLQDQIDILKILMHDRYLT</sequence>
<comment type="catalytic activity">
    <reaction evidence="1">
        <text>beta-D-fructose 1,6-bisphosphate + H2O = beta-D-fructose 6-phosphate + phosphate</text>
        <dbReference type="Rhea" id="RHEA:11064"/>
        <dbReference type="ChEBI" id="CHEBI:15377"/>
        <dbReference type="ChEBI" id="CHEBI:32966"/>
        <dbReference type="ChEBI" id="CHEBI:43474"/>
        <dbReference type="ChEBI" id="CHEBI:57634"/>
        <dbReference type="EC" id="3.1.3.11"/>
    </reaction>
</comment>
<comment type="cofactor">
    <cofactor evidence="1">
        <name>Mn(2+)</name>
        <dbReference type="ChEBI" id="CHEBI:29035"/>
    </cofactor>
</comment>
<comment type="pathway">
    <text evidence="1">Carbohydrate biosynthesis; gluconeogenesis.</text>
</comment>
<comment type="similarity">
    <text evidence="1">Belongs to the FBPase class 3 family.</text>
</comment>
<evidence type="ECO:0000255" key="1">
    <source>
        <dbReference type="HAMAP-Rule" id="MF_01854"/>
    </source>
</evidence>